<comment type="function">
    <text evidence="5">Proton-coupled zinc ion antiporter mediating the entry of zinc into the lumen of pancreatic beta cell secretory granules, thereby regulating insulin secretion.</text>
</comment>
<comment type="catalytic activity">
    <reaction evidence="1">
        <text>Zn(2+)(in) + 2 H(+)(out) = Zn(2+)(out) + 2 H(+)(in)</text>
        <dbReference type="Rhea" id="RHEA:72627"/>
        <dbReference type="ChEBI" id="CHEBI:15378"/>
        <dbReference type="ChEBI" id="CHEBI:29105"/>
    </reaction>
</comment>
<comment type="subunit">
    <text evidence="1">Homodimer.</text>
</comment>
<comment type="subcellular location">
    <subcellularLocation>
        <location evidence="3">Cytoplasmic vesicle</location>
        <location evidence="3">Secretory vesicle membrane</location>
        <topology evidence="2">Multi-pass membrane protein</topology>
    </subcellularLocation>
    <subcellularLocation>
        <location evidence="1">Cell membrane</location>
        <topology evidence="2">Multi-pass membrane protein</topology>
    </subcellularLocation>
    <text evidence="1">Associated with insulin and glucagon secretory granules.</text>
</comment>
<comment type="tissue specificity">
    <text evidence="3">Expressed in endocrine pancreatic islet alpha and beta cells. May be more abundant in beta cells than in alpha cells. Expressed in cubical epithelium lining thyroid follicles (at protein level). In the adrenal gland, detected in the cortex, but not in the medulla (at protein level).</text>
</comment>
<comment type="induction">
    <text evidence="4">Down-regulated by IL1B and IFNG.</text>
</comment>
<comment type="miscellaneous">
    <text evidence="1">Each subunit of the homodimer independently transports zinc ions in a pH-dependent manner. The cytosolic pH promotes binding of zinc ions to the transporter binding site. Upon change into the organelle-facing conformation, the two histidines of the zinc-binding site get protonated at lumenal lower pH, triggering zinc release into the organelle. The transporter then moves back to the cytosolic-facing conformation where the two histidines get deprotonated at higher pH, resulting in a net antiport of 2 protons.</text>
</comment>
<comment type="similarity">
    <text evidence="7">Belongs to the cation diffusion facilitator (CDF) transporter (TC 2.A.4) family. SLC30A subfamily.</text>
</comment>
<comment type="sequence caution" evidence="7">
    <conflict type="erroneous gene model prediction">
        <sequence resource="EMBL-CDS" id="EDM16273"/>
    </conflict>
</comment>
<name>ZNT8_RAT</name>
<proteinExistence type="evidence at protein level"/>
<keyword id="KW-0050">Antiport</keyword>
<keyword id="KW-1003">Cell membrane</keyword>
<keyword id="KW-0968">Cytoplasmic vesicle</keyword>
<keyword id="KW-0406">Ion transport</keyword>
<keyword id="KW-0472">Membrane</keyword>
<keyword id="KW-0479">Metal-binding</keyword>
<keyword id="KW-1185">Reference proteome</keyword>
<keyword id="KW-0812">Transmembrane</keyword>
<keyword id="KW-1133">Transmembrane helix</keyword>
<keyword id="KW-0813">Transport</keyword>
<keyword id="KW-0862">Zinc</keyword>
<keyword id="KW-0864">Zinc transport</keyword>
<reference key="1">
    <citation type="submission" date="2005-07" db="EMBL/GenBank/DDBJ databases">
        <authorList>
            <person name="Mural R.J."/>
            <person name="Adams M.D."/>
            <person name="Myers E.W."/>
            <person name="Smith H.O."/>
            <person name="Venter J.C."/>
        </authorList>
    </citation>
    <scope>NUCLEOTIDE SEQUENCE [LARGE SCALE GENOMIC DNA]</scope>
</reference>
<reference key="2">
    <citation type="journal article" date="2009" name="Nutr. Metab. Cardiovasc. Dis.">
        <title>Diabetes-linked zinc transporter ZnT8 is a homodimeric protein expressed by distinct rodent endocrine cell types in the pancreas and other glands.</title>
        <authorList>
            <person name="Murgia C."/>
            <person name="Devirgiliis C."/>
            <person name="Mancini E."/>
            <person name="Donadel G."/>
            <person name="Zalewski P."/>
            <person name="Perozzi G."/>
        </authorList>
    </citation>
    <scope>SUBCELLULAR LOCATION</scope>
    <scope>TISSUE SPECIFICITY</scope>
</reference>
<reference key="3">
    <citation type="journal article" date="2009" name="PLoS ONE">
        <title>Down-regulation of ZnT8 expression in INS-1 rat pancreatic beta cells reduces insulin content and glucose-inducible insulin secretion.</title>
        <authorList>
            <person name="Fu Y."/>
            <person name="Tian W."/>
            <person name="Pratt E.B."/>
            <person name="Dirling L.B."/>
            <person name="Shyng S.L."/>
            <person name="Meshul C.K."/>
            <person name="Cohen D.M."/>
        </authorList>
    </citation>
    <scope>FUNCTION</scope>
</reference>
<reference key="4">
    <citation type="journal article" date="2009" name="BMC Endocr. Disord.">
        <title>Zinc transporter gene expression is regulated by pro-inflammatory cytokines: a potential role for zinc transporters in beta-cell apoptosis?</title>
        <authorList>
            <person name="Egefjord L."/>
            <person name="Jensen J.L."/>
            <person name="Bang-Berthelsen C.H."/>
            <person name="Petersen A.B."/>
            <person name="Smidt K."/>
            <person name="Schmitz O."/>
            <person name="Karlsen A.E."/>
            <person name="Pociot F."/>
            <person name="Chimienti F."/>
            <person name="Rungby J."/>
            <person name="Magnusson N.E."/>
        </authorList>
    </citation>
    <scope>INDUCTION BY IL1B AND IFNG</scope>
</reference>
<evidence type="ECO:0000250" key="1">
    <source>
        <dbReference type="UniProtKB" id="Q8IWU4"/>
    </source>
</evidence>
<evidence type="ECO:0000255" key="2"/>
<evidence type="ECO:0000269" key="3">
    <source>
    </source>
</evidence>
<evidence type="ECO:0000269" key="4">
    <source>
    </source>
</evidence>
<evidence type="ECO:0000269" key="5">
    <source>
    </source>
</evidence>
<evidence type="ECO:0000303" key="6">
    <source>
    </source>
</evidence>
<evidence type="ECO:0000305" key="7"/>
<evidence type="ECO:0000305" key="8">
    <source>
    </source>
</evidence>
<evidence type="ECO:0000312" key="9">
    <source>
        <dbReference type="RGD" id="1308282"/>
    </source>
</evidence>
<dbReference type="EMBL" id="CH473950">
    <property type="protein sequence ID" value="EDM16273.1"/>
    <property type="status" value="ALT_SEQ"/>
    <property type="molecule type" value="Genomic_DNA"/>
</dbReference>
<dbReference type="RefSeq" id="NP_001124010.1">
    <property type="nucleotide sequence ID" value="NM_001130538.1"/>
</dbReference>
<dbReference type="RefSeq" id="XP_006241707.1">
    <property type="nucleotide sequence ID" value="XM_006241645.5"/>
</dbReference>
<dbReference type="SMR" id="P0CE46"/>
<dbReference type="FunCoup" id="P0CE46">
    <property type="interactions" value="30"/>
</dbReference>
<dbReference type="STRING" id="10116.ENSRNOP00000069455"/>
<dbReference type="PhosphoSitePlus" id="P0CE46"/>
<dbReference type="PaxDb" id="10116-ENSRNOP00000006410"/>
<dbReference type="Ensembl" id="ENSRNOT00000006410.7">
    <property type="protein sequence ID" value="ENSRNOP00000006410.7"/>
    <property type="gene ID" value="ENSRNOG00000004747.7"/>
</dbReference>
<dbReference type="GeneID" id="299903"/>
<dbReference type="KEGG" id="rno:299903"/>
<dbReference type="UCSC" id="RGD:1308282">
    <property type="organism name" value="rat"/>
</dbReference>
<dbReference type="AGR" id="RGD:1308282"/>
<dbReference type="CTD" id="169026"/>
<dbReference type="RGD" id="1308282">
    <property type="gene designation" value="Slc30a8"/>
</dbReference>
<dbReference type="eggNOG" id="KOG1482">
    <property type="taxonomic scope" value="Eukaryota"/>
</dbReference>
<dbReference type="GeneTree" id="ENSGT00940000160706"/>
<dbReference type="HOGENOM" id="CLU_013430_0_1_1"/>
<dbReference type="InParanoid" id="P0CE46"/>
<dbReference type="OMA" id="RATKMYA"/>
<dbReference type="OrthoDB" id="9944568at2759"/>
<dbReference type="PhylomeDB" id="P0CE46"/>
<dbReference type="TreeFam" id="TF313382"/>
<dbReference type="Reactome" id="R-RNO-264876">
    <property type="pathway name" value="Insulin processing"/>
</dbReference>
<dbReference type="Reactome" id="R-RNO-435368">
    <property type="pathway name" value="Zinc efflux and compartmentalization by the SLC30 family"/>
</dbReference>
<dbReference type="PRO" id="PR:P0CE46"/>
<dbReference type="Proteomes" id="UP000002494">
    <property type="component" value="Chromosome 7"/>
</dbReference>
<dbReference type="Proteomes" id="UP000234681">
    <property type="component" value="Chromosome 7"/>
</dbReference>
<dbReference type="Bgee" id="ENSRNOG00000004747">
    <property type="expression patterns" value="Expressed in pancreas and 5 other cell types or tissues"/>
</dbReference>
<dbReference type="ExpressionAtlas" id="P0CE46">
    <property type="expression patterns" value="baseline"/>
</dbReference>
<dbReference type="GO" id="GO:0031410">
    <property type="term" value="C:cytoplasmic vesicle"/>
    <property type="evidence" value="ECO:0000266"/>
    <property type="project" value="RGD"/>
</dbReference>
<dbReference type="GO" id="GO:0005886">
    <property type="term" value="C:plasma membrane"/>
    <property type="evidence" value="ECO:0000266"/>
    <property type="project" value="RGD"/>
</dbReference>
<dbReference type="GO" id="GO:0030141">
    <property type="term" value="C:secretory granule"/>
    <property type="evidence" value="ECO:0000266"/>
    <property type="project" value="RGD"/>
</dbReference>
<dbReference type="GO" id="GO:0030667">
    <property type="term" value="C:secretory granule membrane"/>
    <property type="evidence" value="ECO:0000250"/>
    <property type="project" value="UniProtKB"/>
</dbReference>
<dbReference type="GO" id="GO:0030658">
    <property type="term" value="C:transport vesicle membrane"/>
    <property type="evidence" value="ECO:0007669"/>
    <property type="project" value="UniProtKB-SubCell"/>
</dbReference>
<dbReference type="GO" id="GO:0046872">
    <property type="term" value="F:metal ion binding"/>
    <property type="evidence" value="ECO:0007669"/>
    <property type="project" value="UniProtKB-KW"/>
</dbReference>
<dbReference type="GO" id="GO:0042803">
    <property type="term" value="F:protein homodimerization activity"/>
    <property type="evidence" value="ECO:0000266"/>
    <property type="project" value="RGD"/>
</dbReference>
<dbReference type="GO" id="GO:0005385">
    <property type="term" value="F:zinc ion transmembrane transporter activity"/>
    <property type="evidence" value="ECO:0000315"/>
    <property type="project" value="BHF-UCL"/>
</dbReference>
<dbReference type="GO" id="GO:0140826">
    <property type="term" value="F:zinc:proton antiporter activity"/>
    <property type="evidence" value="ECO:0000250"/>
    <property type="project" value="UniProtKB"/>
</dbReference>
<dbReference type="GO" id="GO:0030070">
    <property type="term" value="P:insulin processing"/>
    <property type="evidence" value="ECO:0000266"/>
    <property type="project" value="RGD"/>
</dbReference>
<dbReference type="GO" id="GO:0030073">
    <property type="term" value="P:insulin secretion"/>
    <property type="evidence" value="ECO:0000315"/>
    <property type="project" value="RGD"/>
</dbReference>
<dbReference type="GO" id="GO:0006882">
    <property type="term" value="P:intracellular zinc ion homeostasis"/>
    <property type="evidence" value="ECO:0000315"/>
    <property type="project" value="BHF-UCL"/>
</dbReference>
<dbReference type="GO" id="GO:0032024">
    <property type="term" value="P:positive regulation of insulin secretion"/>
    <property type="evidence" value="ECO:0000315"/>
    <property type="project" value="BHF-UCL"/>
</dbReference>
<dbReference type="GO" id="GO:0060627">
    <property type="term" value="P:regulation of vesicle-mediated transport"/>
    <property type="evidence" value="ECO:0000315"/>
    <property type="project" value="BHF-UCL"/>
</dbReference>
<dbReference type="GO" id="GO:0009749">
    <property type="term" value="P:response to glucose"/>
    <property type="evidence" value="ECO:0000315"/>
    <property type="project" value="BHF-UCL"/>
</dbReference>
<dbReference type="GO" id="GO:0070555">
    <property type="term" value="P:response to interleukin-1"/>
    <property type="evidence" value="ECO:0000270"/>
    <property type="project" value="RGD"/>
</dbReference>
<dbReference type="GO" id="GO:0034341">
    <property type="term" value="P:response to type II interferon"/>
    <property type="evidence" value="ECO:0000270"/>
    <property type="project" value="RGD"/>
</dbReference>
<dbReference type="GO" id="GO:0010043">
    <property type="term" value="P:response to zinc ion"/>
    <property type="evidence" value="ECO:0000318"/>
    <property type="project" value="GO_Central"/>
</dbReference>
<dbReference type="GO" id="GO:0071578">
    <property type="term" value="P:zinc ion import across plasma membrane"/>
    <property type="evidence" value="ECO:0000315"/>
    <property type="project" value="BHF-UCL"/>
</dbReference>
<dbReference type="GO" id="GO:0062111">
    <property type="term" value="P:zinc ion import into organelle"/>
    <property type="evidence" value="ECO:0000250"/>
    <property type="project" value="UniProtKB"/>
</dbReference>
<dbReference type="GO" id="GO:0071577">
    <property type="term" value="P:zinc ion transmembrane transport"/>
    <property type="evidence" value="ECO:0000318"/>
    <property type="project" value="GO_Central"/>
</dbReference>
<dbReference type="GO" id="GO:0006829">
    <property type="term" value="P:zinc ion transport"/>
    <property type="evidence" value="ECO:0000266"/>
    <property type="project" value="RGD"/>
</dbReference>
<dbReference type="FunFam" id="1.20.1510.10:FF:000002">
    <property type="entry name" value="zinc transporter 3 isoform X1"/>
    <property type="match status" value="1"/>
</dbReference>
<dbReference type="Gene3D" id="1.20.1510.10">
    <property type="entry name" value="Cation efflux protein transmembrane domain"/>
    <property type="match status" value="1"/>
</dbReference>
<dbReference type="InterPro" id="IPR002524">
    <property type="entry name" value="Cation_efflux"/>
</dbReference>
<dbReference type="InterPro" id="IPR036837">
    <property type="entry name" value="Cation_efflux_CTD_sf"/>
</dbReference>
<dbReference type="InterPro" id="IPR027469">
    <property type="entry name" value="Cation_efflux_TMD_sf"/>
</dbReference>
<dbReference type="InterPro" id="IPR050681">
    <property type="entry name" value="CDF/SLC30A"/>
</dbReference>
<dbReference type="NCBIfam" id="TIGR01297">
    <property type="entry name" value="CDF"/>
    <property type="match status" value="1"/>
</dbReference>
<dbReference type="PANTHER" id="PTHR11562">
    <property type="entry name" value="CATION EFFLUX PROTEIN/ ZINC TRANSPORTER"/>
    <property type="match status" value="1"/>
</dbReference>
<dbReference type="PANTHER" id="PTHR11562:SF37">
    <property type="entry name" value="PROTON-COUPLED ZINC ANTIPORTER SLC30A8"/>
    <property type="match status" value="1"/>
</dbReference>
<dbReference type="Pfam" id="PF01545">
    <property type="entry name" value="Cation_efflux"/>
    <property type="match status" value="1"/>
</dbReference>
<dbReference type="SUPFAM" id="SSF160240">
    <property type="entry name" value="Cation efflux protein cytoplasmic domain-like"/>
    <property type="match status" value="1"/>
</dbReference>
<dbReference type="SUPFAM" id="SSF161111">
    <property type="entry name" value="Cation efflux protein transmembrane domain-like"/>
    <property type="match status" value="1"/>
</dbReference>
<accession>P0CE46</accession>
<organism>
    <name type="scientific">Rattus norvegicus</name>
    <name type="common">Rat</name>
    <dbReference type="NCBI Taxonomy" id="10116"/>
    <lineage>
        <taxon>Eukaryota</taxon>
        <taxon>Metazoa</taxon>
        <taxon>Chordata</taxon>
        <taxon>Craniata</taxon>
        <taxon>Vertebrata</taxon>
        <taxon>Euteleostomi</taxon>
        <taxon>Mammalia</taxon>
        <taxon>Eutheria</taxon>
        <taxon>Euarchontoglires</taxon>
        <taxon>Glires</taxon>
        <taxon>Rodentia</taxon>
        <taxon>Myomorpha</taxon>
        <taxon>Muroidea</taxon>
        <taxon>Muridae</taxon>
        <taxon>Murinae</taxon>
        <taxon>Rattus</taxon>
    </lineage>
</organism>
<protein>
    <recommendedName>
        <fullName evidence="8">Proton-coupled zinc antiporter SLC30A8</fullName>
    </recommendedName>
    <alternativeName>
        <fullName evidence="9">Solute carrier family 30 member 8</fullName>
    </alternativeName>
    <alternativeName>
        <fullName>Zinc transporter 8</fullName>
        <shortName>ZnT-8</shortName>
    </alternativeName>
</protein>
<feature type="chain" id="PRO_0000392208" description="Proton-coupled zinc antiporter SLC30A8">
    <location>
        <begin position="1"/>
        <end position="368"/>
    </location>
</feature>
<feature type="topological domain" description="Cytoplasmic" evidence="1">
    <location>
        <begin position="1"/>
        <end position="78"/>
    </location>
</feature>
<feature type="transmembrane region" description="Helical" evidence="2">
    <location>
        <begin position="79"/>
        <end position="99"/>
    </location>
</feature>
<feature type="topological domain" description="Lumenal, vesicle" evidence="1">
    <location>
        <begin position="100"/>
        <end position="102"/>
    </location>
</feature>
<feature type="transmembrane region" description="Helical" evidence="2">
    <location>
        <begin position="103"/>
        <end position="123"/>
    </location>
</feature>
<feature type="topological domain" description="Cytoplasmic" evidence="1">
    <location>
        <begin position="124"/>
        <end position="139"/>
    </location>
</feature>
<feature type="transmembrane region" description="Helical" evidence="2">
    <location>
        <begin position="140"/>
        <end position="160"/>
    </location>
</feature>
<feature type="topological domain" description="Lumenal, vesicle" evidence="1">
    <location>
        <begin position="161"/>
        <end position="174"/>
    </location>
</feature>
<feature type="transmembrane region" description="Helical" evidence="2">
    <location>
        <begin position="175"/>
        <end position="195"/>
    </location>
</feature>
<feature type="topological domain" description="Cytoplasmic" evidence="1">
    <location>
        <begin position="196"/>
        <end position="216"/>
    </location>
</feature>
<feature type="transmembrane region" description="Helical" evidence="2">
    <location>
        <begin position="217"/>
        <end position="237"/>
    </location>
</feature>
<feature type="topological domain" description="Lumenal, vesicle" evidence="1">
    <location>
        <begin position="238"/>
        <end position="245"/>
    </location>
</feature>
<feature type="transmembrane region" description="Helical" evidence="2">
    <location>
        <begin position="246"/>
        <end position="266"/>
    </location>
</feature>
<feature type="topological domain" description="Cytoplasmic" evidence="1">
    <location>
        <begin position="267"/>
        <end position="368"/>
    </location>
</feature>
<feature type="short sequence motif" description="HCH Motif; seals regulatory zinc-binding pocket" evidence="1">
    <location>
        <begin position="51"/>
        <end position="53"/>
    </location>
</feature>
<feature type="binding site" description="in chain A" evidence="1">
    <location>
        <position position="51"/>
    </location>
    <ligand>
        <name>Zn(2+)</name>
        <dbReference type="ChEBI" id="CHEBI:29105"/>
        <label>3</label>
        <note>regulatory; ligand shared between homodimeric partners</note>
    </ligand>
</feature>
<feature type="binding site" description="in chain A" evidence="1">
    <location>
        <position position="52"/>
    </location>
    <ligand>
        <name>Zn(2+)</name>
        <dbReference type="ChEBI" id="CHEBI:29105"/>
        <label>2</label>
        <note>regulatory; ligand shared between homodimeric partners</note>
    </ligand>
</feature>
<feature type="binding site" description="in chain A" evidence="1">
    <location>
        <position position="53"/>
    </location>
    <ligand>
        <name>Zn(2+)</name>
        <dbReference type="ChEBI" id="CHEBI:29105"/>
        <label>3</label>
        <note>regulatory; ligand shared between homodimeric partners</note>
    </ligand>
</feature>
<feature type="binding site" evidence="1">
    <location>
        <position position="105"/>
    </location>
    <ligand>
        <name>Zn(2+)</name>
        <dbReference type="ChEBI" id="CHEBI:29105"/>
        <label>1</label>
        <note>transported zinc</note>
    </ligand>
</feature>
<feature type="binding site" evidence="1">
    <location>
        <position position="109"/>
    </location>
    <ligand>
        <name>Zn(2+)</name>
        <dbReference type="ChEBI" id="CHEBI:29105"/>
        <label>1</label>
        <note>transported zinc</note>
    </ligand>
</feature>
<feature type="binding site" evidence="1">
    <location>
        <position position="219"/>
    </location>
    <ligand>
        <name>Zn(2+)</name>
        <dbReference type="ChEBI" id="CHEBI:29105"/>
        <label>1</label>
        <note>transported zinc</note>
    </ligand>
</feature>
<feature type="binding site" evidence="1">
    <location>
        <position position="223"/>
    </location>
    <ligand>
        <name>Zn(2+)</name>
        <dbReference type="ChEBI" id="CHEBI:29105"/>
        <label>1</label>
        <note>transported zinc</note>
    </ligand>
</feature>
<feature type="binding site" description="in chain B" evidence="1">
    <location>
        <position position="300"/>
    </location>
    <ligand>
        <name>Zn(2+)</name>
        <dbReference type="ChEBI" id="CHEBI:29105"/>
        <label>2</label>
        <note>regulatory; ligand shared between homodimeric partners</note>
    </ligand>
</feature>
<feature type="binding site" description="in chain B" evidence="1">
    <location>
        <position position="317"/>
    </location>
    <ligand>
        <name>Zn(2+)</name>
        <dbReference type="ChEBI" id="CHEBI:29105"/>
        <label>2</label>
        <note>regulatory; ligand shared between homodimeric partners</note>
    </ligand>
</feature>
<feature type="binding site" evidence="1">
    <location>
        <position position="344"/>
    </location>
    <ligand>
        <name>Zn(2+)</name>
        <dbReference type="ChEBI" id="CHEBI:29105"/>
        <label>4</label>
        <note>low affinity</note>
    </ligand>
</feature>
<feature type="binding site" description="in chain B" evidence="1">
    <location>
        <position position="351"/>
    </location>
    <ligand>
        <name>Zn(2+)</name>
        <dbReference type="ChEBI" id="CHEBI:29105"/>
        <label>2</label>
        <note>regulatory; ligand shared between homodimeric partners</note>
    </ligand>
</feature>
<feature type="binding site" description="in chain B" evidence="1">
    <location>
        <position position="360"/>
    </location>
    <ligand>
        <name>Zn(2+)</name>
        <dbReference type="ChEBI" id="CHEBI:29105"/>
        <label>3</label>
        <note>regulatory; ligand shared between homodimeric partners</note>
    </ligand>
</feature>
<feature type="binding site" description="in chain B" evidence="1">
    <location>
        <position position="363"/>
    </location>
    <ligand>
        <name>Zn(2+)</name>
        <dbReference type="ChEBI" id="CHEBI:29105"/>
        <label>3</label>
        <note>regulatory; ligand shared between homodimeric partners</note>
    </ligand>
</feature>
<sequence length="368" mass="40128">MEFLERTYLVNDQATKMYAFTSDRERGQKPVNKDQCPGDGPERPEAGAIYHCHNSFKATGNRSSKQVHAKWRLCAASAICFFFMVAEVVGGHVAGSLAVLTDAAHLLIDLTSFLLSLFSLWLSSRPPSKRLTFGWYRAEILGALLSVLCIWVVTGVLVYLACERLLYPDYQIQAGIMITVSGCAVAANIVLTLILHQRHLGHNHKDAQANASVRAAFVHALGDVFQSTSVLISALIIYFKPDYKMADPVCTFISSVLALASTVMILKDFSILLMEGVPKGLSYNSVKELLLTVDGVISVHNLHIWSLTVNQVILSVHVATAASQDSQSVRTGIACALSSSFDLHSLTIQIESAADQDPSCLLCEDPQD</sequence>
<gene>
    <name evidence="9" type="primary">Slc30a8</name>
    <name evidence="6" type="synonym">Znt8</name>
</gene>